<proteinExistence type="evidence at protein level"/>
<reference key="1">
    <citation type="submission" date="2005-07" db="EMBL/GenBank/DDBJ databases">
        <authorList>
            <person name="Mural R.J."/>
            <person name="Adams M.D."/>
            <person name="Myers E.W."/>
            <person name="Smith H.O."/>
            <person name="Venter J.C."/>
        </authorList>
    </citation>
    <scope>NUCLEOTIDE SEQUENCE [LARGE SCALE GENOMIC DNA]</scope>
    <source>
        <strain>Brown Norway</strain>
    </source>
</reference>
<reference key="2">
    <citation type="journal article" date="2004" name="Genome Res.">
        <title>The status, quality, and expansion of the NIH full-length cDNA project: the Mammalian Gene Collection (MGC).</title>
        <authorList>
            <consortium name="The MGC Project Team"/>
        </authorList>
    </citation>
    <scope>NUCLEOTIDE SEQUENCE [LARGE SCALE MRNA]</scope>
    <source>
        <strain>Brown Norway/NHsdMcwi</strain>
        <tissue>Brain</tissue>
    </source>
</reference>
<reference key="3">
    <citation type="journal article" date="2004" name="Biochem. Biophys. Res. Commun.">
        <title>FLRT3, a cell surface molecule containing LRR repeats and a FNIII domain, promotes neurite outgrowth.</title>
        <authorList>
            <person name="Tsuji L."/>
            <person name="Yamashita T."/>
            <person name="Kubo T."/>
            <person name="Madura T."/>
            <person name="Tanaka H."/>
            <person name="Hosokawa K."/>
            <person name="Tohyama M."/>
        </authorList>
    </citation>
    <scope>TISSUE SPECIFICITY</scope>
</reference>
<reference key="4">
    <citation type="journal article" date="2004" name="Mol. Cell. Neurosci.">
        <title>FLRT3 is expressed in sensory neurons after peripheral nerve injury and regulates neurite outgrowth.</title>
        <authorList>
            <person name="Robinson M."/>
            <person name="Parsons Perez M.C."/>
            <person name="Tebar L."/>
            <person name="Palmer J."/>
            <person name="Patel A."/>
            <person name="Marks D."/>
            <person name="Sheasby A."/>
            <person name="De Felipe C."/>
            <person name="Coffin R."/>
            <person name="Livesey F.J."/>
            <person name="Hunt S.P."/>
        </authorList>
    </citation>
    <scope>FUNCTION</scope>
    <scope>SUBCELLULAR LOCATION</scope>
    <scope>TISSUE SPECIFICITY</scope>
    <scope>INDUCTION BY PERIPHERAL NERVE INJURY</scope>
    <scope>DEVELOPMENTAL STAGE</scope>
</reference>
<reference key="5">
    <citation type="journal article" date="2012" name="Neuron">
        <title>FLRT proteins are endogenous latrophilin ligands and regulate excitatory synapse development.</title>
        <authorList>
            <person name="O'Sullivan M.L."/>
            <person name="de Wit J."/>
            <person name="Savas J.N."/>
            <person name="Comoletti D."/>
            <person name="Otto-Hitt S."/>
            <person name="Yates J.R. III"/>
            <person name="Ghosh A."/>
        </authorList>
    </citation>
    <scope>INTERACTION WITH ADGRL1 AND ADGRL3</scope>
    <scope>SUBCELLULAR LOCATION</scope>
    <scope>IDENTIFICATION BY MASS SPECTROMETRY</scope>
    <scope>TISSUE SPECIFICITY</scope>
</reference>
<name>FLRT3_RAT</name>
<organism>
    <name type="scientific">Rattus norvegicus</name>
    <name type="common">Rat</name>
    <dbReference type="NCBI Taxonomy" id="10116"/>
    <lineage>
        <taxon>Eukaryota</taxon>
        <taxon>Metazoa</taxon>
        <taxon>Chordata</taxon>
        <taxon>Craniata</taxon>
        <taxon>Vertebrata</taxon>
        <taxon>Euteleostomi</taxon>
        <taxon>Mammalia</taxon>
        <taxon>Eutheria</taxon>
        <taxon>Euarchontoglires</taxon>
        <taxon>Glires</taxon>
        <taxon>Rodentia</taxon>
        <taxon>Myomorpha</taxon>
        <taxon>Muroidea</taxon>
        <taxon>Muridae</taxon>
        <taxon>Murinae</taxon>
        <taxon>Rattus</taxon>
    </lineage>
</organism>
<protein>
    <recommendedName>
        <fullName>Leucine-rich repeat transmembrane protein FLRT3</fullName>
    </recommendedName>
    <alternativeName>
        <fullName>Fibronectin-like domain-containing leucine-rich transmembrane protein 3</fullName>
    </alternativeName>
</protein>
<feature type="signal peptide" evidence="3">
    <location>
        <begin position="1"/>
        <end position="28"/>
    </location>
</feature>
<feature type="chain" id="PRO_0000352675" description="Leucine-rich repeat transmembrane protein FLRT3">
    <location>
        <begin position="29"/>
        <end position="649"/>
    </location>
</feature>
<feature type="topological domain" description="Extracellular" evidence="3">
    <location>
        <begin position="29"/>
        <end position="528"/>
    </location>
</feature>
<feature type="transmembrane region" description="Helical" evidence="3">
    <location>
        <begin position="529"/>
        <end position="549"/>
    </location>
</feature>
<feature type="topological domain" description="Cytoplasmic" evidence="3">
    <location>
        <begin position="550"/>
        <end position="649"/>
    </location>
</feature>
<feature type="domain" description="LRRNT" evidence="3">
    <location>
        <begin position="29"/>
        <end position="58"/>
    </location>
</feature>
<feature type="repeat" description="LRR 1" evidence="3">
    <location>
        <begin position="59"/>
        <end position="80"/>
    </location>
</feature>
<feature type="repeat" description="LRR 2" evidence="3">
    <location>
        <begin position="84"/>
        <end position="104"/>
    </location>
</feature>
<feature type="repeat" description="LRR 3" evidence="3">
    <location>
        <begin position="105"/>
        <end position="126"/>
    </location>
</feature>
<feature type="repeat" description="LRR 4" evidence="3">
    <location>
        <begin position="129"/>
        <end position="150"/>
    </location>
</feature>
<feature type="repeat" description="LRR 5" evidence="3">
    <location>
        <begin position="155"/>
        <end position="176"/>
    </location>
</feature>
<feature type="repeat" description="LRR 6" evidence="3">
    <location>
        <begin position="177"/>
        <end position="197"/>
    </location>
</feature>
<feature type="repeat" description="LRR 7" evidence="3">
    <location>
        <begin position="200"/>
        <end position="220"/>
    </location>
</feature>
<feature type="repeat" description="LRR 8" evidence="3">
    <location>
        <begin position="226"/>
        <end position="247"/>
    </location>
</feature>
<feature type="repeat" description="LRR 9" evidence="3">
    <location>
        <begin position="248"/>
        <end position="269"/>
    </location>
</feature>
<feature type="repeat" description="LRR 10" evidence="3">
    <location>
        <begin position="272"/>
        <end position="293"/>
    </location>
</feature>
<feature type="domain" description="LRRCT" evidence="3">
    <location>
        <begin position="305"/>
        <end position="357"/>
    </location>
</feature>
<feature type="domain" description="Fibronectin type-III" evidence="4">
    <location>
        <begin position="405"/>
        <end position="504"/>
    </location>
</feature>
<feature type="region of interest" description="Interaction with ADGRL3" evidence="2">
    <location>
        <begin position="38"/>
        <end position="67"/>
    </location>
</feature>
<feature type="region of interest" description="Disordered" evidence="5">
    <location>
        <begin position="378"/>
        <end position="405"/>
    </location>
</feature>
<feature type="region of interest" description="Disordered" evidence="5">
    <location>
        <begin position="629"/>
        <end position="649"/>
    </location>
</feature>
<feature type="compositionally biased region" description="Basic and acidic residues" evidence="5">
    <location>
        <begin position="389"/>
        <end position="401"/>
    </location>
</feature>
<feature type="glycosylation site" description="N-linked (GlcNAc...) asparagine" evidence="3">
    <location>
        <position position="226"/>
    </location>
</feature>
<feature type="glycosylation site" description="N-linked (GlcNAc...) asparagine" evidence="3">
    <location>
        <position position="282"/>
    </location>
</feature>
<feature type="glycosylation site" description="N-linked (GlcNAc...) asparagine" evidence="3">
    <location>
        <position position="296"/>
    </location>
</feature>
<feature type="disulfide bond" evidence="1">
    <location>
        <begin position="31"/>
        <end position="37"/>
    </location>
</feature>
<feature type="disulfide bond" evidence="1">
    <location>
        <begin position="35"/>
        <end position="44"/>
    </location>
</feature>
<feature type="disulfide bond" evidence="1">
    <location>
        <begin position="309"/>
        <end position="334"/>
    </location>
</feature>
<gene>
    <name type="primary">Flrt3</name>
</gene>
<accession>B1H234</accession>
<sequence>MISPAWSLFLIGTKIGLFFQVAPLSVMAKSCPSVCRCDAGFIYCNDRSLTSIPVGIPEDATTLYLQNNQINNVGIPSDLKNLLKVQRIYLYHNSLDEFPTNLPKYVKELHLQENNIRTITYDSLSKIPYLEELHLDDNSVSAVSIEEGAFRDSNYLRLLFLSRNHLSTIPGGLPRTIEELRLDDNRISTISSPSLHGLTSLKRLVLDGNLLNNHGLGDKVFFNLVNLTELSLVRNSLTAAPVNLPGTSLRKLYLQDNHINRVPPNAFSYLRQLYRLDMSNNNLSNLPQGIFDDLDNITQLILRNNPWYCGCKMKWVRDWLQSLPVKVNVRGLMCQAPEKVRGMAIKDLSAELFDCKDSGIVSTVQITTAIPNTAYPAQGQWPAPVTKQPDIKNPKLTKDQRTTGSPSRKTILITVKSVTPDTIHISWRLALPMTALRLSWLKLGHSPAFGSITETIVTGERSEYLVTALEPESPYRVCMVPMETSNLYLFDETPVCIETQTAPLRMYNPTTTLNREQEKEPYKNPNLPLAAIIGGAVALVSIALLALVCWYVHRNGSLFSRNCAYSKGRRRKDDYAEAGTKKDNSILEIRETSFQMLPISNEPISKEEFVIHTIFPPNGMNLYKNNLSESSSNRSYRDSGIPDLDHSHS</sequence>
<keyword id="KW-0130">Cell adhesion</keyword>
<keyword id="KW-0965">Cell junction</keyword>
<keyword id="KW-1003">Cell membrane</keyword>
<keyword id="KW-0966">Cell projection</keyword>
<keyword id="KW-0968">Cytoplasmic vesicle</keyword>
<keyword id="KW-0217">Developmental protein</keyword>
<keyword id="KW-1015">Disulfide bond</keyword>
<keyword id="KW-0256">Endoplasmic reticulum</keyword>
<keyword id="KW-0325">Glycoprotein</keyword>
<keyword id="KW-0433">Leucine-rich repeat</keyword>
<keyword id="KW-0472">Membrane</keyword>
<keyword id="KW-1185">Reference proteome</keyword>
<keyword id="KW-0677">Repeat</keyword>
<keyword id="KW-0964">Secreted</keyword>
<keyword id="KW-0732">Signal</keyword>
<keyword id="KW-0770">Synapse</keyword>
<keyword id="KW-0771">Synaptosome</keyword>
<keyword id="KW-0812">Transmembrane</keyword>
<keyword id="KW-1133">Transmembrane helix</keyword>
<comment type="function">
    <text evidence="1 2 7 8">Functions in cell-cell adhesion, cell migration and axon guidance, exerting an attractive or repulsive role depending on its interaction partners. Plays a role in the spatial organization of brain neurons. Plays a role in vascular development in the retina (By similarity). Plays a role in cell-cell adhesion via its interaction with ADGRL3 and probably also other latrophilins that are expressed at the surface of adjacent cells (By similarity). Interaction with the intracellular domain of ROBO1 mediates axon attraction towards cells expressing NTN1. Mediates axon growth cone collapse and plays a repulsive role in neuron guidance via its interaction with UNC5B, and possibly also other UNC-5 family members (By similarity). Promotes neurite outgrowth (in vitro) (By similarity). Mediates cell-cell contacts that promote an increase both in neurite number and in neurite length (PubMed:15485775). Plays a role in the regulation of the density of glutamaergic synapses (PubMed:22405201). Plays a role in fibroblast growth factor-mediated signaling cascades. Required for normal morphogenesis during embryonic development, but not for normal embryonic patterning. Required for normal ventral closure, headfold fusion and definitive endoderm migration during embryonic development. Required for the formation of a normal basement membrane and the maintenance of a normal anterior visceral endoderm during embryonic development (By similarity).</text>
</comment>
<comment type="subunit">
    <text evidence="1 2 8">Monomer and homodimer. Self-associates (via leucine-rich repeats), giving rise to homooligomers. Interacts with FGFR1 (By similarity). Interacts (via extracellular domain) with ADGRL1/LPHN1 and ADGRL3 (via olfactomedin-like domain) (PubMed:22405201). Interacts (via extracellular domain) with LPHN2 (via olfactomedin-like domain). Interacts (via extracellular domain) with UNC5B (via Ig domain). May also interact (via extracellular domain) with UNC5A and UNC5C. Interacts (via extracellular domain) with UNC5D (via extracellular domain). Identified in complexes composed of FLRT3, ADGRL3 and UNC5B, respectively FLRT3, ADGRL3 and UNC5D (By similarity). Interacts (via cytoplasmic domain) with ROBO1 (By similarity).</text>
</comment>
<comment type="subcellular location">
    <subcellularLocation>
        <location evidence="7 8">Cell membrane</location>
        <topology evidence="1">Single-pass membrane protein</topology>
    </subcellularLocation>
    <subcellularLocation>
        <location evidence="1">Presynaptic cell membrane</location>
        <topology evidence="1">Single-pass membrane protein</topology>
    </subcellularLocation>
    <subcellularLocation>
        <location evidence="8">Synapse</location>
        <location evidence="8">Synaptosome</location>
    </subcellularLocation>
    <subcellularLocation>
        <location evidence="8">Postsynaptic density</location>
    </subcellularLocation>
    <subcellularLocation>
        <location evidence="8">Cell projection</location>
        <location evidence="8">Dendrite</location>
    </subcellularLocation>
    <subcellularLocation>
        <location evidence="8">Synapse</location>
    </subcellularLocation>
    <subcellularLocation>
        <location evidence="7">Presynaptic cell membrane</location>
    </subcellularLocation>
    <subcellularLocation>
        <location evidence="7">Cell projection</location>
        <location evidence="7">Axon</location>
    </subcellularLocation>
    <subcellularLocation>
        <location evidence="7">Cell projection</location>
        <location evidence="7">Growth cone membrane</location>
    </subcellularLocation>
    <subcellularLocation>
        <location evidence="7">Cytoplasmic vesicle</location>
    </subcellularLocation>
    <subcellularLocation>
        <location evidence="1">Endoplasmic reticulum membrane</location>
    </subcellularLocation>
    <subcellularLocation>
        <location evidence="1">Cell junction</location>
        <location evidence="1">Focal adhesion</location>
    </subcellularLocation>
    <subcellularLocation>
        <location evidence="1">Secreted</location>
    </subcellularLocation>
    <text evidence="1 7 8">Detected on dendritic punctae that colocalize in part with glutamaergic synapses, but not with GABAergic synapses (PubMed:22405201). Proteolytic cleavage in the juxtamembrane region gives rise to a shedded ectodomain (By similarity).</text>
</comment>
<comment type="tissue specificity">
    <text evidence="6 7 8">Detected in brain (at protein level) (PubMed:22405201). Detected in brain neurons, especially in basal ganglia, hippocampus dentate gyrus and CA3 region, cerebellum and in olfactory bulb (PubMed:14706654, PubMed:15485775).</text>
</comment>
<comment type="developmental stage">
    <text evidence="7">At 12 dpc, detected in the developing brain, eye, lateral lip of the dermomyotome, somites and branchial arch.</text>
</comment>
<comment type="induction">
    <text evidence="7">Up-regulated in neurons in dorsal root ganglia in response to peripheral nerve injury (at protein level) (PubMed:15485775). Up-regulated in neurons in dorsal root ganglia in response to peripheral nerve injury (PubMed:15485775).</text>
</comment>
<comment type="PTM">
    <text evidence="1">N-glycosylated.</text>
</comment>
<comment type="PTM">
    <text evidence="1">Proteolytic cleavage in the juxtamembrane region gives rise to a soluble ectodomain. Cleavage is probably effected by a metalloprotease.</text>
</comment>
<dbReference type="EMBL" id="CH473949">
    <property type="protein sequence ID" value="EDL80327.1"/>
    <property type="molecule type" value="Genomic_DNA"/>
</dbReference>
<dbReference type="EMBL" id="BC160843">
    <property type="protein sequence ID" value="AAI60843.1"/>
    <property type="molecule type" value="mRNA"/>
</dbReference>
<dbReference type="RefSeq" id="NP_001119763.1">
    <property type="nucleotide sequence ID" value="NM_001126291.1"/>
</dbReference>
<dbReference type="SMR" id="B1H234"/>
<dbReference type="FunCoup" id="B1H234">
    <property type="interactions" value="1486"/>
</dbReference>
<dbReference type="STRING" id="10116.ENSRNOP00000006454"/>
<dbReference type="GlyCosmos" id="B1H234">
    <property type="glycosylation" value="3 sites, No reported glycans"/>
</dbReference>
<dbReference type="GlyGen" id="B1H234">
    <property type="glycosylation" value="3 sites"/>
</dbReference>
<dbReference type="iPTMnet" id="B1H234"/>
<dbReference type="PhosphoSitePlus" id="B1H234"/>
<dbReference type="PaxDb" id="10116-ENSRNOP00000006454"/>
<dbReference type="Ensembl" id="ENSRNOT00000006454.7">
    <property type="protein sequence ID" value="ENSRNOP00000006454.6"/>
    <property type="gene ID" value="ENSRNOG00000004874.7"/>
</dbReference>
<dbReference type="Ensembl" id="ENSRNOT00000115709.1">
    <property type="protein sequence ID" value="ENSRNOP00000089101.1"/>
    <property type="gene ID" value="ENSRNOG00000004874.7"/>
</dbReference>
<dbReference type="GeneID" id="366205"/>
<dbReference type="KEGG" id="rno:366205"/>
<dbReference type="UCSC" id="RGD:1566005">
    <property type="organism name" value="rat"/>
</dbReference>
<dbReference type="AGR" id="RGD:1566005"/>
<dbReference type="CTD" id="23767"/>
<dbReference type="RGD" id="1566005">
    <property type="gene designation" value="Flrt3"/>
</dbReference>
<dbReference type="eggNOG" id="ENOG502QQBZ">
    <property type="taxonomic scope" value="Eukaryota"/>
</dbReference>
<dbReference type="GeneTree" id="ENSGT00940000159704"/>
<dbReference type="HOGENOM" id="CLU_027624_0_0_1"/>
<dbReference type="InParanoid" id="B1H234"/>
<dbReference type="OMA" id="DAIHISW"/>
<dbReference type="OrthoDB" id="676979at2759"/>
<dbReference type="PhylomeDB" id="B1H234"/>
<dbReference type="TreeFam" id="TF331598"/>
<dbReference type="Reactome" id="R-RNO-5654687">
    <property type="pathway name" value="Downstream signaling of activated FGFR1"/>
</dbReference>
<dbReference type="PRO" id="PR:B1H234"/>
<dbReference type="Proteomes" id="UP000002494">
    <property type="component" value="Chromosome 3"/>
</dbReference>
<dbReference type="Proteomes" id="UP000234681">
    <property type="component" value="Chromosome 3"/>
</dbReference>
<dbReference type="GO" id="GO:0043679">
    <property type="term" value="C:axon terminus"/>
    <property type="evidence" value="ECO:0000314"/>
    <property type="project" value="UniProtKB"/>
</dbReference>
<dbReference type="GO" id="GO:0044295">
    <property type="term" value="C:axonal growth cone"/>
    <property type="evidence" value="ECO:0000250"/>
    <property type="project" value="UniProtKB"/>
</dbReference>
<dbReference type="GO" id="GO:0005911">
    <property type="term" value="C:cell-cell junction"/>
    <property type="evidence" value="ECO:0000266"/>
    <property type="project" value="RGD"/>
</dbReference>
<dbReference type="GO" id="GO:0031410">
    <property type="term" value="C:cytoplasmic vesicle"/>
    <property type="evidence" value="ECO:0007669"/>
    <property type="project" value="UniProtKB-KW"/>
</dbReference>
<dbReference type="GO" id="GO:0005829">
    <property type="term" value="C:cytosol"/>
    <property type="evidence" value="ECO:0007669"/>
    <property type="project" value="Ensembl"/>
</dbReference>
<dbReference type="GO" id="GO:0030425">
    <property type="term" value="C:dendrite"/>
    <property type="evidence" value="ECO:0007669"/>
    <property type="project" value="UniProtKB-SubCell"/>
</dbReference>
<dbReference type="GO" id="GO:0005789">
    <property type="term" value="C:endoplasmic reticulum membrane"/>
    <property type="evidence" value="ECO:0007669"/>
    <property type="project" value="UniProtKB-SubCell"/>
</dbReference>
<dbReference type="GO" id="GO:0005615">
    <property type="term" value="C:extracellular space"/>
    <property type="evidence" value="ECO:0000266"/>
    <property type="project" value="RGD"/>
</dbReference>
<dbReference type="GO" id="GO:0005925">
    <property type="term" value="C:focal adhesion"/>
    <property type="evidence" value="ECO:0000266"/>
    <property type="project" value="RGD"/>
</dbReference>
<dbReference type="GO" id="GO:0098978">
    <property type="term" value="C:glutamatergic synapse"/>
    <property type="evidence" value="ECO:0000266"/>
    <property type="project" value="RGD"/>
</dbReference>
<dbReference type="GO" id="GO:0032584">
    <property type="term" value="C:growth cone membrane"/>
    <property type="evidence" value="ECO:0007669"/>
    <property type="project" value="UniProtKB-SubCell"/>
</dbReference>
<dbReference type="GO" id="GO:0005886">
    <property type="term" value="C:plasma membrane"/>
    <property type="evidence" value="ECO:0000314"/>
    <property type="project" value="UniProtKB"/>
</dbReference>
<dbReference type="GO" id="GO:0014069">
    <property type="term" value="C:postsynaptic density"/>
    <property type="evidence" value="ECO:0007669"/>
    <property type="project" value="UniProtKB-SubCell"/>
</dbReference>
<dbReference type="GO" id="GO:0045211">
    <property type="term" value="C:postsynaptic membrane"/>
    <property type="evidence" value="ECO:0000266"/>
    <property type="project" value="RGD"/>
</dbReference>
<dbReference type="GO" id="GO:0042734">
    <property type="term" value="C:presynaptic membrane"/>
    <property type="evidence" value="ECO:0007669"/>
    <property type="project" value="UniProtKB-SubCell"/>
</dbReference>
<dbReference type="GO" id="GO:0097060">
    <property type="term" value="C:synaptic membrane"/>
    <property type="evidence" value="ECO:0000314"/>
    <property type="project" value="UniProtKB"/>
</dbReference>
<dbReference type="GO" id="GO:0045499">
    <property type="term" value="F:chemorepellent activity"/>
    <property type="evidence" value="ECO:0000266"/>
    <property type="project" value="RGD"/>
</dbReference>
<dbReference type="GO" id="GO:0005104">
    <property type="term" value="F:fibroblast growth factor receptor binding"/>
    <property type="evidence" value="ECO:0000266"/>
    <property type="project" value="RGD"/>
</dbReference>
<dbReference type="GO" id="GO:0042803">
    <property type="term" value="F:protein homodimerization activity"/>
    <property type="evidence" value="ECO:0000266"/>
    <property type="project" value="RGD"/>
</dbReference>
<dbReference type="GO" id="GO:0007411">
    <property type="term" value="P:axon guidance"/>
    <property type="evidence" value="ECO:0000316"/>
    <property type="project" value="MGI"/>
</dbReference>
<dbReference type="GO" id="GO:0098742">
    <property type="term" value="P:cell-cell adhesion via plasma-membrane adhesion molecules"/>
    <property type="evidence" value="ECO:0000250"/>
    <property type="project" value="UniProtKB"/>
</dbReference>
<dbReference type="GO" id="GO:0048598">
    <property type="term" value="P:embryonic morphogenesis"/>
    <property type="evidence" value="ECO:0000250"/>
    <property type="project" value="UniProtKB"/>
</dbReference>
<dbReference type="GO" id="GO:0008543">
    <property type="term" value="P:fibroblast growth factor receptor signaling pathway"/>
    <property type="evidence" value="ECO:0000250"/>
    <property type="project" value="UniProtKB"/>
</dbReference>
<dbReference type="GO" id="GO:0060322">
    <property type="term" value="P:head development"/>
    <property type="evidence" value="ECO:0000250"/>
    <property type="project" value="UniProtKB"/>
</dbReference>
<dbReference type="GO" id="GO:0007507">
    <property type="term" value="P:heart development"/>
    <property type="evidence" value="ECO:0000250"/>
    <property type="project" value="UniProtKB"/>
</dbReference>
<dbReference type="GO" id="GO:0031175">
    <property type="term" value="P:neuron projection development"/>
    <property type="evidence" value="ECO:0000315"/>
    <property type="project" value="UniProtKB"/>
</dbReference>
<dbReference type="GO" id="GO:1990138">
    <property type="term" value="P:neuron projection extension"/>
    <property type="evidence" value="ECO:0000315"/>
    <property type="project" value="UniProtKB"/>
</dbReference>
<dbReference type="GO" id="GO:0051965">
    <property type="term" value="P:positive regulation of synapse assembly"/>
    <property type="evidence" value="ECO:0000266"/>
    <property type="project" value="RGD"/>
</dbReference>
<dbReference type="GO" id="GO:0003345">
    <property type="term" value="P:proepicardium cell migration involved in pericardium morphogenesis"/>
    <property type="evidence" value="ECO:0000250"/>
    <property type="project" value="UniProtKB"/>
</dbReference>
<dbReference type="GO" id="GO:0048678">
    <property type="term" value="P:response to axon injury"/>
    <property type="evidence" value="ECO:0000315"/>
    <property type="project" value="UniProtKB"/>
</dbReference>
<dbReference type="GO" id="GO:0007416">
    <property type="term" value="P:synapse assembly"/>
    <property type="evidence" value="ECO:0000250"/>
    <property type="project" value="UniProtKB"/>
</dbReference>
<dbReference type="GO" id="GO:0099560">
    <property type="term" value="P:synaptic membrane adhesion"/>
    <property type="evidence" value="ECO:0000266"/>
    <property type="project" value="RGD"/>
</dbReference>
<dbReference type="FunFam" id="3.80.10.10:FF:000043">
    <property type="entry name" value="Leucine-rich repeat transmembrane protein FLRT3"/>
    <property type="match status" value="1"/>
</dbReference>
<dbReference type="Gene3D" id="3.80.10.10">
    <property type="entry name" value="Ribonuclease Inhibitor"/>
    <property type="match status" value="1"/>
</dbReference>
<dbReference type="InterPro" id="IPR000483">
    <property type="entry name" value="Cys-rich_flank_reg_C"/>
</dbReference>
<dbReference type="InterPro" id="IPR003961">
    <property type="entry name" value="FN3_dom"/>
</dbReference>
<dbReference type="InterPro" id="IPR001611">
    <property type="entry name" value="Leu-rich_rpt"/>
</dbReference>
<dbReference type="InterPro" id="IPR003591">
    <property type="entry name" value="Leu-rich_rpt_typical-subtyp"/>
</dbReference>
<dbReference type="InterPro" id="IPR032675">
    <property type="entry name" value="LRR_dom_sf"/>
</dbReference>
<dbReference type="InterPro" id="IPR000372">
    <property type="entry name" value="LRRNT"/>
</dbReference>
<dbReference type="InterPro" id="IPR050333">
    <property type="entry name" value="SLRP"/>
</dbReference>
<dbReference type="PANTHER" id="PTHR45712">
    <property type="entry name" value="AGAP008170-PA"/>
    <property type="match status" value="1"/>
</dbReference>
<dbReference type="PANTHER" id="PTHR45712:SF27">
    <property type="entry name" value="LRRNT DOMAIN-CONTAINING PROTEIN"/>
    <property type="match status" value="1"/>
</dbReference>
<dbReference type="Pfam" id="PF13855">
    <property type="entry name" value="LRR_8"/>
    <property type="match status" value="2"/>
</dbReference>
<dbReference type="SMART" id="SM00369">
    <property type="entry name" value="LRR_TYP"/>
    <property type="match status" value="7"/>
</dbReference>
<dbReference type="SMART" id="SM00082">
    <property type="entry name" value="LRRCT"/>
    <property type="match status" value="1"/>
</dbReference>
<dbReference type="SMART" id="SM00013">
    <property type="entry name" value="LRRNT"/>
    <property type="match status" value="1"/>
</dbReference>
<dbReference type="SUPFAM" id="SSF52058">
    <property type="entry name" value="L domain-like"/>
    <property type="match status" value="2"/>
</dbReference>
<dbReference type="PROSITE" id="PS50853">
    <property type="entry name" value="FN3"/>
    <property type="match status" value="1"/>
</dbReference>
<dbReference type="PROSITE" id="PS51450">
    <property type="entry name" value="LRR"/>
    <property type="match status" value="8"/>
</dbReference>
<evidence type="ECO:0000250" key="1">
    <source>
        <dbReference type="UniProtKB" id="Q8BGT1"/>
    </source>
</evidence>
<evidence type="ECO:0000250" key="2">
    <source>
        <dbReference type="UniProtKB" id="Q9NZU0"/>
    </source>
</evidence>
<evidence type="ECO:0000255" key="3"/>
<evidence type="ECO:0000255" key="4">
    <source>
        <dbReference type="PROSITE-ProRule" id="PRU00316"/>
    </source>
</evidence>
<evidence type="ECO:0000256" key="5">
    <source>
        <dbReference type="SAM" id="MobiDB-lite"/>
    </source>
</evidence>
<evidence type="ECO:0000269" key="6">
    <source>
    </source>
</evidence>
<evidence type="ECO:0000269" key="7">
    <source>
    </source>
</evidence>
<evidence type="ECO:0000269" key="8">
    <source>
    </source>
</evidence>